<organism>
    <name type="scientific">Herpetosiphon aurantiacus (strain ATCC 23779 / DSM 785 / 114-95)</name>
    <dbReference type="NCBI Taxonomy" id="316274"/>
    <lineage>
        <taxon>Bacteria</taxon>
        <taxon>Bacillati</taxon>
        <taxon>Chloroflexota</taxon>
        <taxon>Chloroflexia</taxon>
        <taxon>Herpetosiphonales</taxon>
        <taxon>Herpetosiphonaceae</taxon>
        <taxon>Herpetosiphon</taxon>
    </lineage>
</organism>
<feature type="chain" id="PRO_1000091629" description="Ribonuclease HII">
    <location>
        <begin position="1"/>
        <end position="207"/>
    </location>
</feature>
<feature type="domain" description="RNase H type-2" evidence="2">
    <location>
        <begin position="17"/>
        <end position="207"/>
    </location>
</feature>
<feature type="binding site" evidence="1">
    <location>
        <position position="23"/>
    </location>
    <ligand>
        <name>a divalent metal cation</name>
        <dbReference type="ChEBI" id="CHEBI:60240"/>
    </ligand>
</feature>
<feature type="binding site" evidence="1">
    <location>
        <position position="24"/>
    </location>
    <ligand>
        <name>a divalent metal cation</name>
        <dbReference type="ChEBI" id="CHEBI:60240"/>
    </ligand>
</feature>
<feature type="binding site" evidence="1">
    <location>
        <position position="120"/>
    </location>
    <ligand>
        <name>a divalent metal cation</name>
        <dbReference type="ChEBI" id="CHEBI:60240"/>
    </ligand>
</feature>
<name>RNH2_HERA2</name>
<evidence type="ECO:0000255" key="1">
    <source>
        <dbReference type="HAMAP-Rule" id="MF_00052"/>
    </source>
</evidence>
<evidence type="ECO:0000255" key="2">
    <source>
        <dbReference type="PROSITE-ProRule" id="PRU01319"/>
    </source>
</evidence>
<sequence length="207" mass="22256">MTIGIHEEQQLWRNGARIVAGVDEVGRGCWAGPVVAAAVSFPTHLLNDPVALAGINDSKTLSAEARQAMAQQIRHLASGIGLGVVSAHLIDLFGIAEATKWAMMHAVLSLPSLPDGLVIDWVKLPELPLLQRSLPKGDAISISVAAASIIAKVYRDNLMHEYDQRDPRYGWAAHKGYGTAQHQRALAAHGPSGLHRRSFKPLAAFVD</sequence>
<reference key="1">
    <citation type="journal article" date="2011" name="Stand. Genomic Sci.">
        <title>Complete genome sequence of the filamentous gliding predatory bacterium Herpetosiphon aurantiacus type strain (114-95(T)).</title>
        <authorList>
            <person name="Kiss H."/>
            <person name="Nett M."/>
            <person name="Domin N."/>
            <person name="Martin K."/>
            <person name="Maresca J.A."/>
            <person name="Copeland A."/>
            <person name="Lapidus A."/>
            <person name="Lucas S."/>
            <person name="Berry K.W."/>
            <person name="Glavina Del Rio T."/>
            <person name="Dalin E."/>
            <person name="Tice H."/>
            <person name="Pitluck S."/>
            <person name="Richardson P."/>
            <person name="Bruce D."/>
            <person name="Goodwin L."/>
            <person name="Han C."/>
            <person name="Detter J.C."/>
            <person name="Schmutz J."/>
            <person name="Brettin T."/>
            <person name="Land M."/>
            <person name="Hauser L."/>
            <person name="Kyrpides N.C."/>
            <person name="Ivanova N."/>
            <person name="Goeker M."/>
            <person name="Woyke T."/>
            <person name="Klenk H.P."/>
            <person name="Bryant D.A."/>
        </authorList>
    </citation>
    <scope>NUCLEOTIDE SEQUENCE [LARGE SCALE GENOMIC DNA]</scope>
    <source>
        <strain>ATCC 23779 / DSM 785 / 114-95</strain>
    </source>
</reference>
<protein>
    <recommendedName>
        <fullName evidence="1">Ribonuclease HII</fullName>
        <shortName evidence="1">RNase HII</shortName>
        <ecNumber evidence="1">3.1.26.4</ecNumber>
    </recommendedName>
</protein>
<gene>
    <name evidence="1" type="primary">rnhB</name>
    <name type="ordered locus">Haur_0224</name>
</gene>
<comment type="function">
    <text evidence="1">Endonuclease that specifically degrades the RNA of RNA-DNA hybrids.</text>
</comment>
<comment type="catalytic activity">
    <reaction evidence="1">
        <text>Endonucleolytic cleavage to 5'-phosphomonoester.</text>
        <dbReference type="EC" id="3.1.26.4"/>
    </reaction>
</comment>
<comment type="cofactor">
    <cofactor evidence="1">
        <name>Mn(2+)</name>
        <dbReference type="ChEBI" id="CHEBI:29035"/>
    </cofactor>
    <cofactor evidence="1">
        <name>Mg(2+)</name>
        <dbReference type="ChEBI" id="CHEBI:18420"/>
    </cofactor>
    <text evidence="1">Manganese or magnesium. Binds 1 divalent metal ion per monomer in the absence of substrate. May bind a second metal ion after substrate binding.</text>
</comment>
<comment type="subcellular location">
    <subcellularLocation>
        <location evidence="1">Cytoplasm</location>
    </subcellularLocation>
</comment>
<comment type="similarity">
    <text evidence="1">Belongs to the RNase HII family.</text>
</comment>
<keyword id="KW-0963">Cytoplasm</keyword>
<keyword id="KW-0255">Endonuclease</keyword>
<keyword id="KW-0378">Hydrolase</keyword>
<keyword id="KW-0464">Manganese</keyword>
<keyword id="KW-0479">Metal-binding</keyword>
<keyword id="KW-0540">Nuclease</keyword>
<dbReference type="EC" id="3.1.26.4" evidence="1"/>
<dbReference type="EMBL" id="CP000875">
    <property type="protein sequence ID" value="ABX02876.1"/>
    <property type="molecule type" value="Genomic_DNA"/>
</dbReference>
<dbReference type="SMR" id="A9B6H3"/>
<dbReference type="FunCoup" id="A9B6H3">
    <property type="interactions" value="465"/>
</dbReference>
<dbReference type="STRING" id="316274.Haur_0224"/>
<dbReference type="KEGG" id="hau:Haur_0224"/>
<dbReference type="eggNOG" id="COG0164">
    <property type="taxonomic scope" value="Bacteria"/>
</dbReference>
<dbReference type="HOGENOM" id="CLU_036532_3_2_0"/>
<dbReference type="InParanoid" id="A9B6H3"/>
<dbReference type="Proteomes" id="UP000000787">
    <property type="component" value="Chromosome"/>
</dbReference>
<dbReference type="GO" id="GO:0005737">
    <property type="term" value="C:cytoplasm"/>
    <property type="evidence" value="ECO:0007669"/>
    <property type="project" value="UniProtKB-SubCell"/>
</dbReference>
<dbReference type="GO" id="GO:0032299">
    <property type="term" value="C:ribonuclease H2 complex"/>
    <property type="evidence" value="ECO:0007669"/>
    <property type="project" value="TreeGrafter"/>
</dbReference>
<dbReference type="GO" id="GO:0030145">
    <property type="term" value="F:manganese ion binding"/>
    <property type="evidence" value="ECO:0007669"/>
    <property type="project" value="UniProtKB-UniRule"/>
</dbReference>
<dbReference type="GO" id="GO:0003723">
    <property type="term" value="F:RNA binding"/>
    <property type="evidence" value="ECO:0007669"/>
    <property type="project" value="InterPro"/>
</dbReference>
<dbReference type="GO" id="GO:0004523">
    <property type="term" value="F:RNA-DNA hybrid ribonuclease activity"/>
    <property type="evidence" value="ECO:0007669"/>
    <property type="project" value="UniProtKB-UniRule"/>
</dbReference>
<dbReference type="GO" id="GO:0043137">
    <property type="term" value="P:DNA replication, removal of RNA primer"/>
    <property type="evidence" value="ECO:0007669"/>
    <property type="project" value="TreeGrafter"/>
</dbReference>
<dbReference type="GO" id="GO:0006298">
    <property type="term" value="P:mismatch repair"/>
    <property type="evidence" value="ECO:0007669"/>
    <property type="project" value="TreeGrafter"/>
</dbReference>
<dbReference type="CDD" id="cd07182">
    <property type="entry name" value="RNase_HII_bacteria_HII_like"/>
    <property type="match status" value="1"/>
</dbReference>
<dbReference type="Gene3D" id="3.30.420.10">
    <property type="entry name" value="Ribonuclease H-like superfamily/Ribonuclease H"/>
    <property type="match status" value="1"/>
</dbReference>
<dbReference type="HAMAP" id="MF_00052_B">
    <property type="entry name" value="RNase_HII_B"/>
    <property type="match status" value="1"/>
</dbReference>
<dbReference type="InterPro" id="IPR022898">
    <property type="entry name" value="RNase_HII"/>
</dbReference>
<dbReference type="InterPro" id="IPR001352">
    <property type="entry name" value="RNase_HII/HIII"/>
</dbReference>
<dbReference type="InterPro" id="IPR024567">
    <property type="entry name" value="RNase_HII/HIII_dom"/>
</dbReference>
<dbReference type="InterPro" id="IPR012337">
    <property type="entry name" value="RNaseH-like_sf"/>
</dbReference>
<dbReference type="InterPro" id="IPR036397">
    <property type="entry name" value="RNaseH_sf"/>
</dbReference>
<dbReference type="NCBIfam" id="NF000595">
    <property type="entry name" value="PRK00015.1-3"/>
    <property type="match status" value="1"/>
</dbReference>
<dbReference type="PANTHER" id="PTHR10954">
    <property type="entry name" value="RIBONUCLEASE H2 SUBUNIT A"/>
    <property type="match status" value="1"/>
</dbReference>
<dbReference type="PANTHER" id="PTHR10954:SF18">
    <property type="entry name" value="RIBONUCLEASE HII"/>
    <property type="match status" value="1"/>
</dbReference>
<dbReference type="Pfam" id="PF01351">
    <property type="entry name" value="RNase_HII"/>
    <property type="match status" value="1"/>
</dbReference>
<dbReference type="SUPFAM" id="SSF53098">
    <property type="entry name" value="Ribonuclease H-like"/>
    <property type="match status" value="1"/>
</dbReference>
<dbReference type="PROSITE" id="PS51975">
    <property type="entry name" value="RNASE_H_2"/>
    <property type="match status" value="1"/>
</dbReference>
<proteinExistence type="inferred from homology"/>
<accession>A9B6H3</accession>